<feature type="chain" id="PRO_0000084669" description="ATP-dependent zinc metalloprotease YME1L1">
    <location>
        <begin position="1"/>
        <end position="715"/>
    </location>
</feature>
<feature type="transmembrane region" description="Helical" evidence="4">
    <location>
        <begin position="238"/>
        <end position="258"/>
    </location>
</feature>
<feature type="region of interest" description="Disordered" evidence="5">
    <location>
        <begin position="31"/>
        <end position="54"/>
    </location>
</feature>
<feature type="compositionally biased region" description="Basic and acidic residues" evidence="5">
    <location>
        <begin position="41"/>
        <end position="52"/>
    </location>
</feature>
<feature type="active site" evidence="3">
    <location>
        <position position="542"/>
    </location>
</feature>
<feature type="binding site" evidence="3">
    <location>
        <position position="283"/>
    </location>
    <ligand>
        <name>ATP</name>
        <dbReference type="ChEBI" id="CHEBI:30616"/>
    </ligand>
</feature>
<feature type="binding site" evidence="3">
    <location>
        <position position="325"/>
    </location>
    <ligand>
        <name>ATP</name>
        <dbReference type="ChEBI" id="CHEBI:30616"/>
    </ligand>
</feature>
<feature type="binding site" evidence="3">
    <location>
        <position position="326"/>
    </location>
    <ligand>
        <name>ATP</name>
        <dbReference type="ChEBI" id="CHEBI:30616"/>
    </ligand>
</feature>
<feature type="binding site" evidence="3">
    <location>
        <position position="327"/>
    </location>
    <ligand>
        <name>ATP</name>
        <dbReference type="ChEBI" id="CHEBI:30616"/>
    </ligand>
</feature>
<feature type="binding site" evidence="3">
    <location>
        <position position="328"/>
    </location>
    <ligand>
        <name>ATP</name>
        <dbReference type="ChEBI" id="CHEBI:30616"/>
    </ligand>
</feature>
<feature type="binding site" evidence="3">
    <location>
        <position position="329"/>
    </location>
    <ligand>
        <name>ATP</name>
        <dbReference type="ChEBI" id="CHEBI:30616"/>
    </ligand>
</feature>
<feature type="binding site" evidence="3">
    <location>
        <position position="541"/>
    </location>
    <ligand>
        <name>Zn(2+)</name>
        <dbReference type="ChEBI" id="CHEBI:29105"/>
        <note>catalytic</note>
    </ligand>
</feature>
<feature type="binding site" evidence="3">
    <location>
        <position position="545"/>
    </location>
    <ligand>
        <name>Zn(2+)</name>
        <dbReference type="ChEBI" id="CHEBI:29105"/>
        <note>catalytic</note>
    </ligand>
</feature>
<feature type="binding site" evidence="3">
    <location>
        <position position="619"/>
    </location>
    <ligand>
        <name>Zn(2+)</name>
        <dbReference type="ChEBI" id="CHEBI:29105"/>
        <note>catalytic</note>
    </ligand>
</feature>
<keyword id="KW-0067">ATP-binding</keyword>
<keyword id="KW-0378">Hydrolase</keyword>
<keyword id="KW-0472">Membrane</keyword>
<keyword id="KW-0479">Metal-binding</keyword>
<keyword id="KW-0482">Metalloprotease</keyword>
<keyword id="KW-0496">Mitochondrion</keyword>
<keyword id="KW-0999">Mitochondrion inner membrane</keyword>
<keyword id="KW-0547">Nucleotide-binding</keyword>
<keyword id="KW-0645">Protease</keyword>
<keyword id="KW-1185">Reference proteome</keyword>
<keyword id="KW-0812">Transmembrane</keyword>
<keyword id="KW-1133">Transmembrane helix</keyword>
<keyword id="KW-0862">Zinc</keyword>
<gene>
    <name type="primary">Yme1l1</name>
</gene>
<dbReference type="EC" id="3.4.24.-" evidence="2"/>
<dbReference type="EC" id="3.6.-.-" evidence="2"/>
<dbReference type="EMBL" id="AF151784">
    <property type="protein sequence ID" value="AAK57557.1"/>
    <property type="molecule type" value="mRNA"/>
</dbReference>
<dbReference type="SMR" id="Q925S8"/>
<dbReference type="FunCoup" id="Q925S8">
    <property type="interactions" value="4032"/>
</dbReference>
<dbReference type="IntAct" id="Q925S8">
    <property type="interactions" value="1"/>
</dbReference>
<dbReference type="MINT" id="Q925S8"/>
<dbReference type="STRING" id="10116.ENSRNOP00000023395"/>
<dbReference type="MEROPS" id="M41.026"/>
<dbReference type="iPTMnet" id="Q925S8"/>
<dbReference type="PhosphoSitePlus" id="Q925S8"/>
<dbReference type="jPOST" id="Q925S8"/>
<dbReference type="PaxDb" id="10116-ENSRNOP00000023395"/>
<dbReference type="UCSC" id="RGD:620764">
    <property type="organism name" value="rat"/>
</dbReference>
<dbReference type="AGR" id="RGD:620764"/>
<dbReference type="RGD" id="620764">
    <property type="gene designation" value="Yme1l1"/>
</dbReference>
<dbReference type="eggNOG" id="KOG0734">
    <property type="taxonomic scope" value="Eukaryota"/>
</dbReference>
<dbReference type="InParanoid" id="Q925S8"/>
<dbReference type="PhylomeDB" id="Q925S8"/>
<dbReference type="Reactome" id="R-RNO-8949664">
    <property type="pathway name" value="Processing of SMDT1"/>
</dbReference>
<dbReference type="Reactome" id="R-RNO-9840373">
    <property type="pathway name" value="Cellular response to mitochondrial stress"/>
</dbReference>
<dbReference type="PRO" id="PR:Q925S8"/>
<dbReference type="Proteomes" id="UP000002494">
    <property type="component" value="Unplaced"/>
</dbReference>
<dbReference type="GO" id="GO:0005743">
    <property type="term" value="C:mitochondrial inner membrane"/>
    <property type="evidence" value="ECO:0000250"/>
    <property type="project" value="UniProtKB"/>
</dbReference>
<dbReference type="GO" id="GO:0005739">
    <property type="term" value="C:mitochondrion"/>
    <property type="evidence" value="ECO:0000266"/>
    <property type="project" value="RGD"/>
</dbReference>
<dbReference type="GO" id="GO:0005524">
    <property type="term" value="F:ATP binding"/>
    <property type="evidence" value="ECO:0007669"/>
    <property type="project" value="UniProtKB-KW"/>
</dbReference>
<dbReference type="GO" id="GO:0016887">
    <property type="term" value="F:ATP hydrolysis activity"/>
    <property type="evidence" value="ECO:0007669"/>
    <property type="project" value="InterPro"/>
</dbReference>
<dbReference type="GO" id="GO:0004176">
    <property type="term" value="F:ATP-dependent peptidase activity"/>
    <property type="evidence" value="ECO:0000250"/>
    <property type="project" value="UniProtKB"/>
</dbReference>
<dbReference type="GO" id="GO:0046872">
    <property type="term" value="F:metal ion binding"/>
    <property type="evidence" value="ECO:0007669"/>
    <property type="project" value="UniProtKB-KW"/>
</dbReference>
<dbReference type="GO" id="GO:0004222">
    <property type="term" value="F:metalloendopeptidase activity"/>
    <property type="evidence" value="ECO:0007669"/>
    <property type="project" value="InterPro"/>
</dbReference>
<dbReference type="GO" id="GO:0008283">
    <property type="term" value="P:cell population proliferation"/>
    <property type="evidence" value="ECO:0000250"/>
    <property type="project" value="UniProtKB"/>
</dbReference>
<dbReference type="GO" id="GO:0009267">
    <property type="term" value="P:cellular response to starvation"/>
    <property type="evidence" value="ECO:0000250"/>
    <property type="project" value="UniProtKB"/>
</dbReference>
<dbReference type="GO" id="GO:0035694">
    <property type="term" value="P:mitochondrial protein catabolic process"/>
    <property type="evidence" value="ECO:0000266"/>
    <property type="project" value="RGD"/>
</dbReference>
<dbReference type="GO" id="GO:0034982">
    <property type="term" value="P:mitochondrial protein processing"/>
    <property type="evidence" value="ECO:0000250"/>
    <property type="project" value="UniProtKB"/>
</dbReference>
<dbReference type="GO" id="GO:0007005">
    <property type="term" value="P:mitochondrion organization"/>
    <property type="evidence" value="ECO:0000250"/>
    <property type="project" value="UniProtKB"/>
</dbReference>
<dbReference type="GO" id="GO:0043066">
    <property type="term" value="P:negative regulation of apoptotic process"/>
    <property type="evidence" value="ECO:0000250"/>
    <property type="project" value="UniProtKB"/>
</dbReference>
<dbReference type="GO" id="GO:0097150">
    <property type="term" value="P:neuronal stem cell population maintenance"/>
    <property type="evidence" value="ECO:0000250"/>
    <property type="project" value="UniProtKB"/>
</dbReference>
<dbReference type="GO" id="GO:0010636">
    <property type="term" value="P:positive regulation of mitochondrial fusion"/>
    <property type="evidence" value="ECO:0000250"/>
    <property type="project" value="UniProtKB"/>
</dbReference>
<dbReference type="GO" id="GO:0034214">
    <property type="term" value="P:protein hexamerization"/>
    <property type="evidence" value="ECO:0000266"/>
    <property type="project" value="RGD"/>
</dbReference>
<dbReference type="GO" id="GO:0006515">
    <property type="term" value="P:protein quality control for misfolded or incompletely synthesized proteins"/>
    <property type="evidence" value="ECO:0000250"/>
    <property type="project" value="UniProtKB"/>
</dbReference>
<dbReference type="GO" id="GO:2000035">
    <property type="term" value="P:regulation of stem cell division"/>
    <property type="evidence" value="ECO:0000250"/>
    <property type="project" value="UniProtKB"/>
</dbReference>
<dbReference type="CDD" id="cd19501">
    <property type="entry name" value="RecA-like_FtsH"/>
    <property type="match status" value="1"/>
</dbReference>
<dbReference type="FunFam" id="1.10.8.60:FF:000001">
    <property type="entry name" value="ATP-dependent zinc metalloprotease FtsH"/>
    <property type="match status" value="1"/>
</dbReference>
<dbReference type="FunFam" id="1.20.58.760:FF:000002">
    <property type="entry name" value="ATP-dependent zinc metalloprotease FtsH"/>
    <property type="match status" value="1"/>
</dbReference>
<dbReference type="FunFam" id="3.40.50.300:FF:000195">
    <property type="entry name" value="ATP-dependent zinc metalloprotease FTSH 11"/>
    <property type="match status" value="1"/>
</dbReference>
<dbReference type="Gene3D" id="1.10.8.60">
    <property type="match status" value="1"/>
</dbReference>
<dbReference type="Gene3D" id="3.40.50.300">
    <property type="entry name" value="P-loop containing nucleotide triphosphate hydrolases"/>
    <property type="match status" value="1"/>
</dbReference>
<dbReference type="Gene3D" id="1.20.58.760">
    <property type="entry name" value="Peptidase M41"/>
    <property type="match status" value="1"/>
</dbReference>
<dbReference type="HAMAP" id="MF_01458">
    <property type="entry name" value="FtsH"/>
    <property type="match status" value="1"/>
</dbReference>
<dbReference type="InterPro" id="IPR003593">
    <property type="entry name" value="AAA+_ATPase"/>
</dbReference>
<dbReference type="InterPro" id="IPR041569">
    <property type="entry name" value="AAA_lid_3"/>
</dbReference>
<dbReference type="InterPro" id="IPR003959">
    <property type="entry name" value="ATPase_AAA_core"/>
</dbReference>
<dbReference type="InterPro" id="IPR003960">
    <property type="entry name" value="ATPase_AAA_CS"/>
</dbReference>
<dbReference type="InterPro" id="IPR005936">
    <property type="entry name" value="FtsH"/>
</dbReference>
<dbReference type="InterPro" id="IPR027417">
    <property type="entry name" value="P-loop_NTPase"/>
</dbReference>
<dbReference type="InterPro" id="IPR000642">
    <property type="entry name" value="Peptidase_M41"/>
</dbReference>
<dbReference type="InterPro" id="IPR037219">
    <property type="entry name" value="Peptidase_M41-like"/>
</dbReference>
<dbReference type="NCBIfam" id="TIGR01241">
    <property type="entry name" value="FtsH_fam"/>
    <property type="match status" value="1"/>
</dbReference>
<dbReference type="PANTHER" id="PTHR23076:SF97">
    <property type="entry name" value="ATP-DEPENDENT ZINC METALLOPROTEASE YME1L1"/>
    <property type="match status" value="1"/>
</dbReference>
<dbReference type="PANTHER" id="PTHR23076">
    <property type="entry name" value="METALLOPROTEASE M41 FTSH"/>
    <property type="match status" value="1"/>
</dbReference>
<dbReference type="Pfam" id="PF00004">
    <property type="entry name" value="AAA"/>
    <property type="match status" value="1"/>
</dbReference>
<dbReference type="Pfam" id="PF17862">
    <property type="entry name" value="AAA_lid_3"/>
    <property type="match status" value="1"/>
</dbReference>
<dbReference type="Pfam" id="PF01434">
    <property type="entry name" value="Peptidase_M41"/>
    <property type="match status" value="1"/>
</dbReference>
<dbReference type="SMART" id="SM00382">
    <property type="entry name" value="AAA"/>
    <property type="match status" value="1"/>
</dbReference>
<dbReference type="SUPFAM" id="SSF140990">
    <property type="entry name" value="FtsH protease domain-like"/>
    <property type="match status" value="1"/>
</dbReference>
<dbReference type="SUPFAM" id="SSF52540">
    <property type="entry name" value="P-loop containing nucleoside triphosphate hydrolases"/>
    <property type="match status" value="1"/>
</dbReference>
<dbReference type="PROSITE" id="PS00674">
    <property type="entry name" value="AAA"/>
    <property type="match status" value="1"/>
</dbReference>
<comment type="function">
    <text evidence="1 2">ATP-dependent metalloprotease that catalyzes the degradation of folded and unfolded proteins with a suitable degron sequence in the mitochondrial intermembrane region. Plays an important role in regulating mitochondrial morphology and function by cleaving OPA1 at position S2, giving rise to a form of OPA1 that promotes maintenance of normal mitochondrial structure and mitochondrial protein metabolism (By similarity). Ensures cell proliferation, maintains normal cristae morphology and complex I respiration activity, promotes antiapoptotic activity and protects mitochondria from the accumulation of oxidatively damaged membrane proteins. Required to control the accumulation of nonassembled respiratory chain subunits (NDUFB6, OX4 and ND1) (By similarity). Involved in the mitochondrial adaptation in response to various signals, such as stress or developmental cues, by mediating degradation of mitochondrial proteins to rewire the mitochondrial proteome (By similarity). Catalyzes degradation of mitochondrial proteins, such as translocases, lipid transfer proteins and metabolic enzymes in response to nutrient starvation in order to limit mitochondrial biogenesis: mechanistically, YME1L is activated by decreased phosphatidylethanolamine levels caused by LPIN1 activity in response to mTORC1 inhibition (By similarity). Acts as a regulator of adult neural stem cell self-renewal by promoting mitochondrial proteome rewiring, preserving neural stem and progenitor cells self-renewal. Required for normal, constitutive degradation of PRELID1 (By similarity). Catalyzes the degradation of OMA1 in response to membrane depolarization. Mediates degradation of TIMM17A downstream of the integrated stress response (ISR) (By similarity). Catalyzes degradation of MICU1 when MICU1 is not assembled via an interchain disulfide (By similarity).</text>
</comment>
<comment type="catalytic activity">
    <reaction evidence="2">
        <text>ATP + H2O = ADP + phosphate + H(+)</text>
        <dbReference type="Rhea" id="RHEA:13065"/>
        <dbReference type="ChEBI" id="CHEBI:15377"/>
        <dbReference type="ChEBI" id="CHEBI:15378"/>
        <dbReference type="ChEBI" id="CHEBI:30616"/>
        <dbReference type="ChEBI" id="CHEBI:43474"/>
        <dbReference type="ChEBI" id="CHEBI:456216"/>
    </reaction>
    <physiologicalReaction direction="left-to-right" evidence="2">
        <dbReference type="Rhea" id="RHEA:13066"/>
    </physiologicalReaction>
</comment>
<comment type="cofactor">
    <cofactor evidence="2">
        <name>Zn(2+)</name>
        <dbReference type="ChEBI" id="CHEBI:29105"/>
    </cofactor>
    <text evidence="2">Binds 1 zinc ion per subunit.</text>
</comment>
<comment type="subunit">
    <text evidence="2">Homohexamer; may also form heterohexamers. Exists in several complexes of 600-1100 kDa. Interacts with AFG1L.</text>
</comment>
<comment type="subcellular location">
    <subcellularLocation>
        <location evidence="2">Mitochondrion inner membrane</location>
    </subcellularLocation>
    <subcellularLocation>
        <location evidence="2">Mitochondrion</location>
    </subcellularLocation>
</comment>
<comment type="PTM">
    <text evidence="2">Proteolytically processed by mitochondrial processing peptidase (MPP) to generate the mature form. Degraded in an OMA1-dependent manner in response to oxidative stress.</text>
</comment>
<comment type="similarity">
    <text evidence="7">In the N-terminal section; belongs to the AAA ATPase family.</text>
</comment>
<comment type="similarity">
    <text evidence="7">In the C-terminal section; belongs to the peptidase M41 family.</text>
</comment>
<name>YMEL1_RAT</name>
<evidence type="ECO:0000250" key="1">
    <source>
        <dbReference type="UniProtKB" id="O88967"/>
    </source>
</evidence>
<evidence type="ECO:0000250" key="2">
    <source>
        <dbReference type="UniProtKB" id="Q96TA2"/>
    </source>
</evidence>
<evidence type="ECO:0000250" key="3">
    <source>
        <dbReference type="UniProtKB" id="Q9Y4W6"/>
    </source>
</evidence>
<evidence type="ECO:0000255" key="4"/>
<evidence type="ECO:0000256" key="5">
    <source>
        <dbReference type="SAM" id="MobiDB-lite"/>
    </source>
</evidence>
<evidence type="ECO:0000303" key="6">
    <source ref="1"/>
</evidence>
<evidence type="ECO:0000305" key="7"/>
<accession>Q925S8</accession>
<reference key="1">
    <citation type="submission" date="1999-05" db="EMBL/GenBank/DDBJ databases">
        <title>Partial cDNA sequence of rat meg-4, ATP-dependent metalloprotease (FtsH) homolog.</title>
        <authorList>
            <person name="Miyata T."/>
            <person name="Inagi R."/>
            <person name="Yasuda Y."/>
            <person name="Kurokawa K."/>
        </authorList>
    </citation>
    <scope>NUCLEOTIDE SEQUENCE [MRNA]</scope>
</reference>
<proteinExistence type="evidence at transcript level"/>
<sequence length="715" mass="79867">MFSLSSTVQPQVTVPLSHLINAFHSPKNISVSVNTSASPKQHRDTVAEHEAPSSEPVLNLRDLGLSELKIGQIDKLVENLLPGFYKDKRVSSCWHTSHISAQSFFENKYGHLDMFSTLRSSSLYRQHPKTLQSICSDLQNFPVFIQSRGFKTLKSRTRRLQSTSERLAEAQNIAPSFVKGFLLRDRGTDLESLDKLMKTKNIPEAHQDAFKTGFAEGFLKAQALTQKTNDSLRRTRLILFVLLLFGIYGLLKNPFLSVRFRTTTGLDSAVDPVQMKNVTFEHVKGVEEAKQELQEVVEFLKNPQKFTVLGGKLPKGILLVGPPGTGKTLLARAVAGEADVPFYYASGSEFDEMFVGVGASRIRNLFREAKANAPCVIFIDELDSVGGKRIEFPMHPYSRQTIIQLLAEMDGFKPNEGVIIIGATNFPEALDNALIRPGRFDMQVTVPRPDVKGRTEILKWYLNKIKFDKSVDPEIIARGTVGFSGAELENLVNQAALKAAVDGKEMVTMKELEFSKDKILMGPERRSVEIDNKNKTITAYHESGHAIIAYYTKDAMPINKATIMPRGPTLGHVSLLPENDRWNEIRAQLLAQMDVSMGGRVAEELIFGTDHITTGASSDFDNATKIAKRMVTKFGMSEKLGVMTYSDTGKLSPETQSAIEQEIRILLRESYERAKHILKTHAKEHKNLAEALLTYETLDAKEIQIVLEGKKLEVR</sequence>
<protein>
    <recommendedName>
        <fullName>ATP-dependent zinc metalloprotease YME1L1</fullName>
        <ecNumber evidence="2">3.4.24.-</ecNumber>
        <ecNumber evidence="2">3.6.-.-</ecNumber>
    </recommendedName>
    <alternativeName>
        <fullName>ATP-dependent metalloprotease FtsH1</fullName>
    </alternativeName>
    <alternativeName>
        <fullName evidence="6">Meg-4</fullName>
    </alternativeName>
    <alternativeName>
        <fullName>YME1-like protein 1</fullName>
    </alternativeName>
</protein>
<organism>
    <name type="scientific">Rattus norvegicus</name>
    <name type="common">Rat</name>
    <dbReference type="NCBI Taxonomy" id="10116"/>
    <lineage>
        <taxon>Eukaryota</taxon>
        <taxon>Metazoa</taxon>
        <taxon>Chordata</taxon>
        <taxon>Craniata</taxon>
        <taxon>Vertebrata</taxon>
        <taxon>Euteleostomi</taxon>
        <taxon>Mammalia</taxon>
        <taxon>Eutheria</taxon>
        <taxon>Euarchontoglires</taxon>
        <taxon>Glires</taxon>
        <taxon>Rodentia</taxon>
        <taxon>Myomorpha</taxon>
        <taxon>Muroidea</taxon>
        <taxon>Muridae</taxon>
        <taxon>Murinae</taxon>
        <taxon>Rattus</taxon>
    </lineage>
</organism>